<name>GATY_ECOLX</name>
<gene>
    <name type="primary">gatY</name>
</gene>
<sequence>MYVVSTKQMLNNAQRGGYAVPAFNIHNLETMQVVVETAANLHAPVIIAGTPGTFTHAGTENLLALVSAMAKQYHHPLAIHLDHHTKFDDIAQNLRSGVRSVMIDASHLPFAQNISRVKEVVDFCHRFDVSVEAELGQLGGQEDDVQVNEADAFYTNPAQAREFAEATGIDSLAVAIGTAHGMYASAPVLDFSRLENIRQWVNLPLVLHGASGLSTKDIQQTIKLGICKINVATELKNAFSQALKNYLTAHPEATDPRDYLQSAKSAMRDVVSKVIADCGCEGRA</sequence>
<evidence type="ECO:0000250" key="1"/>
<evidence type="ECO:0000269" key="2">
    <source>
    </source>
</evidence>
<evidence type="ECO:0000305" key="3"/>
<keyword id="KW-0298">Galactitol metabolism</keyword>
<keyword id="KW-0456">Lyase</keyword>
<keyword id="KW-0479">Metal-binding</keyword>
<keyword id="KW-0862">Zinc</keyword>
<accession>P0C8J7</accession>
<accession>P37192</accession>
<accession>P76415</accession>
<organism>
    <name type="scientific">Escherichia coli</name>
    <dbReference type="NCBI Taxonomy" id="562"/>
    <lineage>
        <taxon>Bacteria</taxon>
        <taxon>Pseudomonadati</taxon>
        <taxon>Pseudomonadota</taxon>
        <taxon>Gammaproteobacteria</taxon>
        <taxon>Enterobacterales</taxon>
        <taxon>Enterobacteriaceae</taxon>
        <taxon>Escherichia</taxon>
    </lineage>
</organism>
<comment type="function">
    <text evidence="1 2">Catalytic subunit of the tagatose-1,6-bisphosphate aldolase GatYZ, which catalyzes the reversible aldol condensation of dihydroxyacetone phosphate (DHAP or glycerone-phosphate) with glyceraldehyde 3-phosphate (G3P) to produce tagatose 1,6-bisphosphate (TBP). Requires GatZ subunit for full activity and stability. Is involved in the catabolism of galactitol (By similarity).</text>
</comment>
<comment type="catalytic activity">
    <reaction>
        <text>D-tagatofuranose 1,6-bisphosphate = D-glyceraldehyde 3-phosphate + dihydroxyacetone phosphate</text>
        <dbReference type="Rhea" id="RHEA:22948"/>
        <dbReference type="ChEBI" id="CHEBI:57642"/>
        <dbReference type="ChEBI" id="CHEBI:58694"/>
        <dbReference type="ChEBI" id="CHEBI:59776"/>
        <dbReference type="EC" id="4.1.2.40"/>
    </reaction>
</comment>
<comment type="cofactor">
    <cofactor evidence="1">
        <name>Zn(2+)</name>
        <dbReference type="ChEBI" id="CHEBI:29105"/>
    </cofactor>
    <text evidence="1">Binds 1 zinc ion per subunit.</text>
</comment>
<comment type="pathway">
    <text>Carbohydrate metabolism; D-tagatose 6-phosphate degradation; D-glyceraldehyde 3-phosphate and glycerone phosphate from D-tagatose 6-phosphate: step 2/2.</text>
</comment>
<comment type="subunit">
    <text evidence="1">Forms a complex with GatZ.</text>
</comment>
<comment type="induction">
    <text evidence="2">Constitutively expressed.</text>
</comment>
<comment type="similarity">
    <text evidence="3">Belongs to the class II fructose-bisphosphate aldolase family. TagBP aldolase GatY subfamily.</text>
</comment>
<comment type="sequence caution" evidence="3">
    <conflict type="erroneous initiation">
        <sequence resource="EMBL-CDS" id="CAA56226"/>
    </conflict>
</comment>
<dbReference type="EC" id="4.1.2.40"/>
<dbReference type="EMBL" id="X79837">
    <property type="protein sequence ID" value="CAA56226.1"/>
    <property type="status" value="ALT_INIT"/>
    <property type="molecule type" value="Genomic_DNA"/>
</dbReference>
<dbReference type="SMR" id="P0C8J7"/>
<dbReference type="IntAct" id="P0C8J7">
    <property type="interactions" value="1"/>
</dbReference>
<dbReference type="MINT" id="P0C8J7"/>
<dbReference type="STRING" id="585034.ECIAI1_2170"/>
<dbReference type="eggNOG" id="COG0191">
    <property type="taxonomic scope" value="Bacteria"/>
</dbReference>
<dbReference type="UniPathway" id="UPA00704">
    <property type="reaction ID" value="UER00716"/>
</dbReference>
<dbReference type="GO" id="GO:0005829">
    <property type="term" value="C:cytosol"/>
    <property type="evidence" value="ECO:0007669"/>
    <property type="project" value="TreeGrafter"/>
</dbReference>
<dbReference type="GO" id="GO:0009025">
    <property type="term" value="F:tagatose-bisphosphate aldolase activity"/>
    <property type="evidence" value="ECO:0007669"/>
    <property type="project" value="UniProtKB-UniRule"/>
</dbReference>
<dbReference type="GO" id="GO:0008270">
    <property type="term" value="F:zinc ion binding"/>
    <property type="evidence" value="ECO:0007669"/>
    <property type="project" value="UniProtKB-UniRule"/>
</dbReference>
<dbReference type="GO" id="GO:2001059">
    <property type="term" value="P:D-tagatose 6-phosphate catabolic process"/>
    <property type="evidence" value="ECO:0007669"/>
    <property type="project" value="UniProtKB-UniRule"/>
</dbReference>
<dbReference type="GO" id="GO:0019404">
    <property type="term" value="P:galactitol catabolic process"/>
    <property type="evidence" value="ECO:0007669"/>
    <property type="project" value="InterPro"/>
</dbReference>
<dbReference type="CDD" id="cd00947">
    <property type="entry name" value="TBP_aldolase_IIB"/>
    <property type="match status" value="1"/>
</dbReference>
<dbReference type="FunFam" id="3.20.20.70:FF:000043">
    <property type="entry name" value="D-tagatose-1,6-bisphosphate aldolase subunit GatY"/>
    <property type="match status" value="1"/>
</dbReference>
<dbReference type="Gene3D" id="3.20.20.70">
    <property type="entry name" value="Aldolase class I"/>
    <property type="match status" value="1"/>
</dbReference>
<dbReference type="HAMAP" id="MF_01294">
    <property type="entry name" value="TagBP_aldolase_GatY"/>
    <property type="match status" value="1"/>
</dbReference>
<dbReference type="InterPro" id="IPR013785">
    <property type="entry name" value="Aldolase_TIM"/>
</dbReference>
<dbReference type="InterPro" id="IPR050246">
    <property type="entry name" value="Class_II_FBP_aldolase"/>
</dbReference>
<dbReference type="InterPro" id="IPR000771">
    <property type="entry name" value="FBA_II"/>
</dbReference>
<dbReference type="InterPro" id="IPR011288">
    <property type="entry name" value="TagBP_ald_KbaY/GatY"/>
</dbReference>
<dbReference type="InterPro" id="IPR023955">
    <property type="entry name" value="TagBP_aldolase_GatY"/>
</dbReference>
<dbReference type="NCBIfam" id="TIGR00167">
    <property type="entry name" value="cbbA"/>
    <property type="match status" value="1"/>
</dbReference>
<dbReference type="NCBIfam" id="NF006626">
    <property type="entry name" value="PRK09195.1"/>
    <property type="match status" value="1"/>
</dbReference>
<dbReference type="NCBIfam" id="NF009374">
    <property type="entry name" value="PRK12737.1"/>
    <property type="match status" value="1"/>
</dbReference>
<dbReference type="NCBIfam" id="TIGR01858">
    <property type="entry name" value="tag_bisphos_ald"/>
    <property type="match status" value="1"/>
</dbReference>
<dbReference type="PANTHER" id="PTHR30304">
    <property type="entry name" value="D-TAGATOSE-1,6-BISPHOSPHATE ALDOLASE"/>
    <property type="match status" value="1"/>
</dbReference>
<dbReference type="PANTHER" id="PTHR30304:SF0">
    <property type="entry name" value="D-TAGATOSE-1,6-BISPHOSPHATE ALDOLASE SUBUNIT GATY-RELATED"/>
    <property type="match status" value="1"/>
</dbReference>
<dbReference type="Pfam" id="PF01116">
    <property type="entry name" value="F_bP_aldolase"/>
    <property type="match status" value="1"/>
</dbReference>
<dbReference type="PIRSF" id="PIRSF001359">
    <property type="entry name" value="F_bP_aldolase_II"/>
    <property type="match status" value="1"/>
</dbReference>
<dbReference type="SUPFAM" id="SSF51569">
    <property type="entry name" value="Aldolase"/>
    <property type="match status" value="1"/>
</dbReference>
<dbReference type="PROSITE" id="PS00602">
    <property type="entry name" value="ALDOLASE_CLASS_II_1"/>
    <property type="match status" value="1"/>
</dbReference>
<dbReference type="PROSITE" id="PS00806">
    <property type="entry name" value="ALDOLASE_CLASS_II_2"/>
    <property type="match status" value="1"/>
</dbReference>
<feature type="chain" id="PRO_0000355330" description="D-tagatose-1,6-bisphosphate aldolase subunit GatY">
    <location>
        <begin position="1"/>
        <end position="284"/>
    </location>
</feature>
<feature type="active site" description="Proton donor" evidence="1">
    <location>
        <position position="82"/>
    </location>
</feature>
<feature type="binding site" evidence="1">
    <location>
        <position position="83"/>
    </location>
    <ligand>
        <name>Zn(2+)</name>
        <dbReference type="ChEBI" id="CHEBI:29105"/>
        <note>catalytic</note>
    </ligand>
</feature>
<feature type="binding site" evidence="1">
    <location>
        <position position="180"/>
    </location>
    <ligand>
        <name>Zn(2+)</name>
        <dbReference type="ChEBI" id="CHEBI:29105"/>
        <note>catalytic</note>
    </ligand>
</feature>
<feature type="binding site" evidence="1">
    <location>
        <position position="181"/>
    </location>
    <ligand>
        <name>dihydroxyacetone phosphate</name>
        <dbReference type="ChEBI" id="CHEBI:57642"/>
    </ligand>
</feature>
<feature type="binding site" evidence="1">
    <location>
        <position position="208"/>
    </location>
    <ligand>
        <name>Zn(2+)</name>
        <dbReference type="ChEBI" id="CHEBI:29105"/>
        <note>catalytic</note>
    </ligand>
</feature>
<feature type="binding site" evidence="1">
    <location>
        <begin position="209"/>
        <end position="211"/>
    </location>
    <ligand>
        <name>dihydroxyacetone phosphate</name>
        <dbReference type="ChEBI" id="CHEBI:57642"/>
    </ligand>
</feature>
<feature type="binding site" evidence="1">
    <location>
        <begin position="230"/>
        <end position="233"/>
    </location>
    <ligand>
        <name>dihydroxyacetone phosphate</name>
        <dbReference type="ChEBI" id="CHEBI:57642"/>
    </ligand>
</feature>
<protein>
    <recommendedName>
        <fullName>D-tagatose-1,6-bisphosphate aldolase subunit GatY</fullName>
        <shortName>TBPA</shortName>
        <shortName>TagBP aldolase</shortName>
        <ecNumber>4.1.2.40</ecNumber>
    </recommendedName>
    <alternativeName>
        <fullName>D-tagatose-bisphosphate aldolase class II</fullName>
    </alternativeName>
    <alternativeName>
        <fullName>Tagatose-bisphosphate aldolase</fullName>
    </alternativeName>
</protein>
<proteinExistence type="evidence at protein level"/>
<reference key="1">
    <citation type="journal article" date="1995" name="Biochim. Biophys. Acta">
        <title>Sequence of the gat operon for galactitol utilization from a wild-type strain EC3132 of Escherichia coli.</title>
        <authorList>
            <person name="Nobelmann B."/>
            <person name="Lengeler J.W."/>
        </authorList>
    </citation>
    <scope>NUCLEOTIDE SEQUENCE [GENOMIC DNA]</scope>
    <source>
        <strain>EC3132</strain>
    </source>
</reference>
<reference key="2">
    <citation type="journal article" date="1996" name="J. Bacteriol.">
        <title>Molecular analysis of the gat genes from Escherichia coli and of their roles in galactitol transport and metabolism.</title>
        <authorList>
            <person name="Nobelmann B."/>
            <person name="Lengeler J.W."/>
        </authorList>
    </citation>
    <scope>FUNCTION AS A TAGBP ALDOLASE</scope>
    <scope>ROLE IN GALACTITOL CATABOLISM</scope>
    <scope>INDUCTION</scope>
    <source>
        <strain>EC3132</strain>
    </source>
</reference>